<reference key="1">
    <citation type="journal article" date="2007" name="PLoS ONE">
        <title>Analysis of the neurotoxin complex genes in Clostridium botulinum A1-A4 and B1 strains: BoNT/A3, /Ba4 and /B1 clusters are located within plasmids.</title>
        <authorList>
            <person name="Smith T.J."/>
            <person name="Hill K.K."/>
            <person name="Foley B.T."/>
            <person name="Detter J.C."/>
            <person name="Munk A.C."/>
            <person name="Bruce D.C."/>
            <person name="Doggett N.A."/>
            <person name="Smith L.A."/>
            <person name="Marks J.D."/>
            <person name="Xie G."/>
            <person name="Brettin T.S."/>
        </authorList>
    </citation>
    <scope>NUCLEOTIDE SEQUENCE [LARGE SCALE GENOMIC DNA]</scope>
    <source>
        <strain>ATCC 19397 / Type A</strain>
    </source>
</reference>
<evidence type="ECO:0000255" key="1">
    <source>
        <dbReference type="HAMAP-Rule" id="MF_00339"/>
    </source>
</evidence>
<gene>
    <name evidence="1" type="primary">pfkA</name>
    <name type="ordered locus">CLB_3429</name>
</gene>
<proteinExistence type="inferred from homology"/>
<organism>
    <name type="scientific">Clostridium botulinum (strain ATCC 19397 / Type A)</name>
    <dbReference type="NCBI Taxonomy" id="441770"/>
    <lineage>
        <taxon>Bacteria</taxon>
        <taxon>Bacillati</taxon>
        <taxon>Bacillota</taxon>
        <taxon>Clostridia</taxon>
        <taxon>Eubacteriales</taxon>
        <taxon>Clostridiaceae</taxon>
        <taxon>Clostridium</taxon>
    </lineage>
</organism>
<protein>
    <recommendedName>
        <fullName evidence="1">ATP-dependent 6-phosphofructokinase</fullName>
        <shortName evidence="1">ATP-PFK</shortName>
        <shortName evidence="1">Phosphofructokinase</shortName>
        <ecNumber evidence="1">2.7.1.11</ecNumber>
    </recommendedName>
    <alternativeName>
        <fullName evidence="1">Phosphohexokinase</fullName>
    </alternativeName>
</protein>
<keyword id="KW-0021">Allosteric enzyme</keyword>
<keyword id="KW-0067">ATP-binding</keyword>
<keyword id="KW-0963">Cytoplasm</keyword>
<keyword id="KW-0324">Glycolysis</keyword>
<keyword id="KW-0418">Kinase</keyword>
<keyword id="KW-0460">Magnesium</keyword>
<keyword id="KW-0479">Metal-binding</keyword>
<keyword id="KW-0547">Nucleotide-binding</keyword>
<keyword id="KW-0808">Transferase</keyword>
<dbReference type="EC" id="2.7.1.11" evidence="1"/>
<dbReference type="EMBL" id="CP000726">
    <property type="protein sequence ID" value="ABS33296.1"/>
    <property type="molecule type" value="Genomic_DNA"/>
</dbReference>
<dbReference type="RefSeq" id="WP_003357588.1">
    <property type="nucleotide sequence ID" value="NC_009697.1"/>
</dbReference>
<dbReference type="SMR" id="A7FYW7"/>
<dbReference type="GeneID" id="5184682"/>
<dbReference type="KEGG" id="cba:CLB_3429"/>
<dbReference type="HOGENOM" id="CLU_020655_0_1_9"/>
<dbReference type="UniPathway" id="UPA00109">
    <property type="reaction ID" value="UER00182"/>
</dbReference>
<dbReference type="GO" id="GO:0005945">
    <property type="term" value="C:6-phosphofructokinase complex"/>
    <property type="evidence" value="ECO:0007669"/>
    <property type="project" value="TreeGrafter"/>
</dbReference>
<dbReference type="GO" id="GO:0003872">
    <property type="term" value="F:6-phosphofructokinase activity"/>
    <property type="evidence" value="ECO:0007669"/>
    <property type="project" value="UniProtKB-UniRule"/>
</dbReference>
<dbReference type="GO" id="GO:0016208">
    <property type="term" value="F:AMP binding"/>
    <property type="evidence" value="ECO:0007669"/>
    <property type="project" value="TreeGrafter"/>
</dbReference>
<dbReference type="GO" id="GO:0005524">
    <property type="term" value="F:ATP binding"/>
    <property type="evidence" value="ECO:0007669"/>
    <property type="project" value="UniProtKB-KW"/>
</dbReference>
<dbReference type="GO" id="GO:0070095">
    <property type="term" value="F:fructose-6-phosphate binding"/>
    <property type="evidence" value="ECO:0007669"/>
    <property type="project" value="TreeGrafter"/>
</dbReference>
<dbReference type="GO" id="GO:0042802">
    <property type="term" value="F:identical protein binding"/>
    <property type="evidence" value="ECO:0007669"/>
    <property type="project" value="TreeGrafter"/>
</dbReference>
<dbReference type="GO" id="GO:0046872">
    <property type="term" value="F:metal ion binding"/>
    <property type="evidence" value="ECO:0007669"/>
    <property type="project" value="UniProtKB-KW"/>
</dbReference>
<dbReference type="GO" id="GO:0048029">
    <property type="term" value="F:monosaccharide binding"/>
    <property type="evidence" value="ECO:0007669"/>
    <property type="project" value="TreeGrafter"/>
</dbReference>
<dbReference type="GO" id="GO:0061621">
    <property type="term" value="P:canonical glycolysis"/>
    <property type="evidence" value="ECO:0007669"/>
    <property type="project" value="TreeGrafter"/>
</dbReference>
<dbReference type="GO" id="GO:0030388">
    <property type="term" value="P:fructose 1,6-bisphosphate metabolic process"/>
    <property type="evidence" value="ECO:0007669"/>
    <property type="project" value="TreeGrafter"/>
</dbReference>
<dbReference type="GO" id="GO:0006002">
    <property type="term" value="P:fructose 6-phosphate metabolic process"/>
    <property type="evidence" value="ECO:0007669"/>
    <property type="project" value="InterPro"/>
</dbReference>
<dbReference type="FunFam" id="3.40.50.450:FF:000001">
    <property type="entry name" value="ATP-dependent 6-phosphofructokinase"/>
    <property type="match status" value="1"/>
</dbReference>
<dbReference type="FunFam" id="3.40.50.460:FF:000002">
    <property type="entry name" value="ATP-dependent 6-phosphofructokinase"/>
    <property type="match status" value="1"/>
</dbReference>
<dbReference type="Gene3D" id="3.40.50.450">
    <property type="match status" value="1"/>
</dbReference>
<dbReference type="Gene3D" id="3.40.50.460">
    <property type="entry name" value="Phosphofructokinase domain"/>
    <property type="match status" value="1"/>
</dbReference>
<dbReference type="HAMAP" id="MF_00339">
    <property type="entry name" value="Phosphofructokinase_I_B1"/>
    <property type="match status" value="1"/>
</dbReference>
<dbReference type="InterPro" id="IPR022953">
    <property type="entry name" value="ATP_PFK"/>
</dbReference>
<dbReference type="InterPro" id="IPR012003">
    <property type="entry name" value="ATP_PFK_prok-type"/>
</dbReference>
<dbReference type="InterPro" id="IPR012828">
    <property type="entry name" value="PFKA_ATP_prok"/>
</dbReference>
<dbReference type="InterPro" id="IPR015912">
    <property type="entry name" value="Phosphofructokinase_CS"/>
</dbReference>
<dbReference type="InterPro" id="IPR000023">
    <property type="entry name" value="Phosphofructokinase_dom"/>
</dbReference>
<dbReference type="InterPro" id="IPR035966">
    <property type="entry name" value="PKF_sf"/>
</dbReference>
<dbReference type="NCBIfam" id="TIGR02482">
    <property type="entry name" value="PFKA_ATP"/>
    <property type="match status" value="1"/>
</dbReference>
<dbReference type="NCBIfam" id="NF002872">
    <property type="entry name" value="PRK03202.1"/>
    <property type="match status" value="1"/>
</dbReference>
<dbReference type="PANTHER" id="PTHR13697:SF4">
    <property type="entry name" value="ATP-DEPENDENT 6-PHOSPHOFRUCTOKINASE"/>
    <property type="match status" value="1"/>
</dbReference>
<dbReference type="PANTHER" id="PTHR13697">
    <property type="entry name" value="PHOSPHOFRUCTOKINASE"/>
    <property type="match status" value="1"/>
</dbReference>
<dbReference type="Pfam" id="PF00365">
    <property type="entry name" value="PFK"/>
    <property type="match status" value="1"/>
</dbReference>
<dbReference type="PIRSF" id="PIRSF000532">
    <property type="entry name" value="ATP_PFK_prok"/>
    <property type="match status" value="1"/>
</dbReference>
<dbReference type="PRINTS" id="PR00476">
    <property type="entry name" value="PHFRCTKINASE"/>
</dbReference>
<dbReference type="SUPFAM" id="SSF53784">
    <property type="entry name" value="Phosphofructokinase"/>
    <property type="match status" value="1"/>
</dbReference>
<dbReference type="PROSITE" id="PS00433">
    <property type="entry name" value="PHOSPHOFRUCTOKINASE"/>
    <property type="match status" value="1"/>
</dbReference>
<name>PFKA_CLOB1</name>
<accession>A7FYW7</accession>
<feature type="chain" id="PRO_1000059751" description="ATP-dependent 6-phosphofructokinase">
    <location>
        <begin position="1"/>
        <end position="319"/>
    </location>
</feature>
<feature type="active site" description="Proton acceptor" evidence="1">
    <location>
        <position position="127"/>
    </location>
</feature>
<feature type="binding site" evidence="1">
    <location>
        <position position="11"/>
    </location>
    <ligand>
        <name>ATP</name>
        <dbReference type="ChEBI" id="CHEBI:30616"/>
    </ligand>
</feature>
<feature type="binding site" evidence="1">
    <location>
        <begin position="21"/>
        <end position="25"/>
    </location>
    <ligand>
        <name>ADP</name>
        <dbReference type="ChEBI" id="CHEBI:456216"/>
        <note>allosteric activator; ligand shared between dimeric partners</note>
    </ligand>
</feature>
<feature type="binding site" evidence="1">
    <location>
        <begin position="72"/>
        <end position="73"/>
    </location>
    <ligand>
        <name>ATP</name>
        <dbReference type="ChEBI" id="CHEBI:30616"/>
    </ligand>
</feature>
<feature type="binding site" evidence="1">
    <location>
        <begin position="102"/>
        <end position="105"/>
    </location>
    <ligand>
        <name>ATP</name>
        <dbReference type="ChEBI" id="CHEBI:30616"/>
    </ligand>
</feature>
<feature type="binding site" evidence="1">
    <location>
        <position position="103"/>
    </location>
    <ligand>
        <name>Mg(2+)</name>
        <dbReference type="ChEBI" id="CHEBI:18420"/>
        <note>catalytic</note>
    </ligand>
</feature>
<feature type="binding site" description="in other chain" evidence="1">
    <location>
        <begin position="125"/>
        <end position="127"/>
    </location>
    <ligand>
        <name>substrate</name>
        <note>ligand shared between dimeric partners</note>
    </ligand>
</feature>
<feature type="binding site" description="in other chain" evidence="1">
    <location>
        <position position="154"/>
    </location>
    <ligand>
        <name>ADP</name>
        <dbReference type="ChEBI" id="CHEBI:456216"/>
        <note>allosteric activator; ligand shared between dimeric partners</note>
    </ligand>
</feature>
<feature type="binding site" evidence="1">
    <location>
        <position position="162"/>
    </location>
    <ligand>
        <name>substrate</name>
        <note>ligand shared between dimeric partners</note>
    </ligand>
</feature>
<feature type="binding site" description="in other chain" evidence="1">
    <location>
        <begin position="169"/>
        <end position="171"/>
    </location>
    <ligand>
        <name>substrate</name>
        <note>ligand shared between dimeric partners</note>
    </ligand>
</feature>
<feature type="binding site" description="in other chain" evidence="1">
    <location>
        <begin position="185"/>
        <end position="187"/>
    </location>
    <ligand>
        <name>ADP</name>
        <dbReference type="ChEBI" id="CHEBI:456216"/>
        <note>allosteric activator; ligand shared between dimeric partners</note>
    </ligand>
</feature>
<feature type="binding site" description="in other chain" evidence="1">
    <location>
        <position position="211"/>
    </location>
    <ligand>
        <name>ADP</name>
        <dbReference type="ChEBI" id="CHEBI:456216"/>
        <note>allosteric activator; ligand shared between dimeric partners</note>
    </ligand>
</feature>
<feature type="binding site" description="in other chain" evidence="1">
    <location>
        <begin position="213"/>
        <end position="215"/>
    </location>
    <ligand>
        <name>ADP</name>
        <dbReference type="ChEBI" id="CHEBI:456216"/>
        <note>allosteric activator; ligand shared between dimeric partners</note>
    </ligand>
</feature>
<feature type="binding site" description="in other chain" evidence="1">
    <location>
        <position position="222"/>
    </location>
    <ligand>
        <name>substrate</name>
        <note>ligand shared between dimeric partners</note>
    </ligand>
</feature>
<feature type="binding site" evidence="1">
    <location>
        <position position="243"/>
    </location>
    <ligand>
        <name>substrate</name>
        <note>ligand shared between dimeric partners</note>
    </ligand>
</feature>
<feature type="binding site" description="in other chain" evidence="1">
    <location>
        <begin position="249"/>
        <end position="252"/>
    </location>
    <ligand>
        <name>substrate</name>
        <note>ligand shared between dimeric partners</note>
    </ligand>
</feature>
<comment type="function">
    <text evidence="1">Catalyzes the phosphorylation of D-fructose 6-phosphate to fructose 1,6-bisphosphate by ATP, the first committing step of glycolysis.</text>
</comment>
<comment type="catalytic activity">
    <reaction evidence="1">
        <text>beta-D-fructose 6-phosphate + ATP = beta-D-fructose 1,6-bisphosphate + ADP + H(+)</text>
        <dbReference type="Rhea" id="RHEA:16109"/>
        <dbReference type="ChEBI" id="CHEBI:15378"/>
        <dbReference type="ChEBI" id="CHEBI:30616"/>
        <dbReference type="ChEBI" id="CHEBI:32966"/>
        <dbReference type="ChEBI" id="CHEBI:57634"/>
        <dbReference type="ChEBI" id="CHEBI:456216"/>
        <dbReference type="EC" id="2.7.1.11"/>
    </reaction>
</comment>
<comment type="cofactor">
    <cofactor evidence="1">
        <name>Mg(2+)</name>
        <dbReference type="ChEBI" id="CHEBI:18420"/>
    </cofactor>
</comment>
<comment type="activity regulation">
    <text evidence="1">Allosterically activated by ADP and other diphosphonucleosides, and allosterically inhibited by phosphoenolpyruvate.</text>
</comment>
<comment type="pathway">
    <text evidence="1">Carbohydrate degradation; glycolysis; D-glyceraldehyde 3-phosphate and glycerone phosphate from D-glucose: step 3/4.</text>
</comment>
<comment type="subunit">
    <text evidence="1">Homotetramer.</text>
</comment>
<comment type="subcellular location">
    <subcellularLocation>
        <location evidence="1">Cytoplasm</location>
    </subcellularLocation>
</comment>
<comment type="similarity">
    <text evidence="1">Belongs to the phosphofructokinase type A (PFKA) family. ATP-dependent PFK group I subfamily. Prokaryotic clade 'B1' sub-subfamily.</text>
</comment>
<sequence>MRTIAVLTSGGDAPGMNAAIRAVVRTGLEKGLKVMGIQRGYNGLINGEIFEMDTHSVSDIIQRGGTILRTARCEEFRTEQGREKAAKILKAFGIDGLVVIGGDGSFHGAQLLSKLGINTVGLPGTIDNDLAYTDYTIGFDTSINTVLDAINKLRDTSTSHERVSVVEVMGRNCGDIALYTGVAGGAESIIIPEKEYNADKLCKQILQGKLKGKMHNLVLLAEGVGGANELAKYIEEVTGIETRSTILGHIQRGGSPTCMDRILASRMAYKAVELLISGKSSRVVGIKNGKIIDMDIDEALAVERSFDQELYDIATILSK</sequence>